<name>ATG4_ASPCL</name>
<accession>A1CJ08</accession>
<gene>
    <name type="primary">atg4</name>
    <name type="ORF">ACLA_033350</name>
</gene>
<reference key="1">
    <citation type="journal article" date="2008" name="PLoS Genet.">
        <title>Genomic islands in the pathogenic filamentous fungus Aspergillus fumigatus.</title>
        <authorList>
            <person name="Fedorova N.D."/>
            <person name="Khaldi N."/>
            <person name="Joardar V.S."/>
            <person name="Maiti R."/>
            <person name="Amedeo P."/>
            <person name="Anderson M.J."/>
            <person name="Crabtree J."/>
            <person name="Silva J.C."/>
            <person name="Badger J.H."/>
            <person name="Albarraq A."/>
            <person name="Angiuoli S."/>
            <person name="Bussey H."/>
            <person name="Bowyer P."/>
            <person name="Cotty P.J."/>
            <person name="Dyer P.S."/>
            <person name="Egan A."/>
            <person name="Galens K."/>
            <person name="Fraser-Liggett C.M."/>
            <person name="Haas B.J."/>
            <person name="Inman J.M."/>
            <person name="Kent R."/>
            <person name="Lemieux S."/>
            <person name="Malavazi I."/>
            <person name="Orvis J."/>
            <person name="Roemer T."/>
            <person name="Ronning C.M."/>
            <person name="Sundaram J.P."/>
            <person name="Sutton G."/>
            <person name="Turner G."/>
            <person name="Venter J.C."/>
            <person name="White O.R."/>
            <person name="Whitty B.R."/>
            <person name="Youngman P."/>
            <person name="Wolfe K.H."/>
            <person name="Goldman G.H."/>
            <person name="Wortman J.R."/>
            <person name="Jiang B."/>
            <person name="Denning D.W."/>
            <person name="Nierman W.C."/>
        </authorList>
    </citation>
    <scope>NUCLEOTIDE SEQUENCE [LARGE SCALE GENOMIC DNA]</scope>
    <source>
        <strain>ATCC 1007 / CBS 513.65 / DSM 816 / NCTC 3887 / NRRL 1 / QM 1276 / 107</strain>
    </source>
</reference>
<comment type="function">
    <text evidence="1">Cysteine protease that plays a key role in cytoplasm to vacuole transport (Cvt) and autophagy by mediating both proteolytic activation and delipidation of ATG8. Required for selective autophagic degradation of the nucleus (nucleophagy) as well as for mitophagy which contributes to regulate mitochondrial quantity and quality by eliminating the mitochondria to a basal level to fulfill cellular energy requirements and preventing excess ROS production. The protease activity is required for proteolytic activation of ATG8: cleaves the C-terminal amino acid of ATG8 to reveal a C-terminal glycine. ATG8 ubiquitin-like activity requires the exposure of the glycine at the C-terminus for its conjugation to phosphatidylethanolamine (PE) and its insertion to membranes, which is necessary for autophagy. The ATG8-PE conjugate mediates tethering between adjacent membranes and stimulates membrane hemifusion, leading to expansion of the autophagosomal membrane during autophagy. In addition to the protease activity, also catalyzes deconjugation of PE-conjugated forms of ATG8 during macroautophagy: ATG8 delipidation is required to release the protein from membranes, which facilitates multiple events during macroautophagy, and especially for efficient autophagosome biogenesis, the assembly of ATG9-containing tubulovesicular clusters into phagophores/autophagosomes, and for the disassembly of PAS-associated ATG components. ATG8 delipidation by ATG4 also recycles ATG8-PE generated on inappropriate membranes to maintain a reservoir of unlipidated ATG8 that is required for autophagosome formation at the PAS.</text>
</comment>
<comment type="catalytic activity">
    <reaction evidence="1">
        <text>[protein]-C-terminal L-amino acid-glycyl-phosphatidylethanolamide + H2O = [protein]-C-terminal L-amino acid-glycine + a 1,2-diacyl-sn-glycero-3-phosphoethanolamine</text>
        <dbReference type="Rhea" id="RHEA:67548"/>
        <dbReference type="Rhea" id="RHEA-COMP:17323"/>
        <dbReference type="Rhea" id="RHEA-COMP:17324"/>
        <dbReference type="ChEBI" id="CHEBI:15377"/>
        <dbReference type="ChEBI" id="CHEBI:64612"/>
        <dbReference type="ChEBI" id="CHEBI:172940"/>
        <dbReference type="ChEBI" id="CHEBI:172941"/>
    </reaction>
    <physiologicalReaction direction="left-to-right" evidence="1">
        <dbReference type="Rhea" id="RHEA:67549"/>
    </physiologicalReaction>
</comment>
<comment type="subcellular location">
    <subcellularLocation>
        <location evidence="1">Cytoplasm</location>
    </subcellularLocation>
    <subcellularLocation>
        <location evidence="1">Nucleus</location>
    </subcellularLocation>
    <subcellularLocation>
        <location evidence="1">Preautophagosomal structure</location>
    </subcellularLocation>
</comment>
<comment type="similarity">
    <text evidence="3">Belongs to the peptidase C54 family.</text>
</comment>
<protein>
    <recommendedName>
        <fullName>Probable cysteine protease atg4</fullName>
        <ecNumber>3.4.22.-</ecNumber>
    </recommendedName>
    <alternativeName>
        <fullName>Autophagy-related protein 4</fullName>
    </alternativeName>
</protein>
<feature type="chain" id="PRO_0000317832" description="Probable cysteine protease atg4">
    <location>
        <begin position="1"/>
        <end position="400"/>
    </location>
</feature>
<feature type="active site" description="Nucleophile" evidence="2">
    <location>
        <position position="131"/>
    </location>
</feature>
<feature type="active site" evidence="2">
    <location>
        <position position="305"/>
    </location>
</feature>
<feature type="active site" evidence="2">
    <location>
        <position position="307"/>
    </location>
</feature>
<organism>
    <name type="scientific">Aspergillus clavatus (strain ATCC 1007 / CBS 513.65 / DSM 816 / NCTC 3887 / NRRL 1 / QM 1276 / 107)</name>
    <dbReference type="NCBI Taxonomy" id="344612"/>
    <lineage>
        <taxon>Eukaryota</taxon>
        <taxon>Fungi</taxon>
        <taxon>Dikarya</taxon>
        <taxon>Ascomycota</taxon>
        <taxon>Pezizomycotina</taxon>
        <taxon>Eurotiomycetes</taxon>
        <taxon>Eurotiomycetidae</taxon>
        <taxon>Eurotiales</taxon>
        <taxon>Aspergillaceae</taxon>
        <taxon>Aspergillus</taxon>
        <taxon>Aspergillus subgen. Fumigati</taxon>
    </lineage>
</organism>
<sequence>MNSVDIGRYKRIINYLWDPEPRNDLPDEPIWCLGIRYPPNHRGWKTQDQDGSAQGQYEQKTIPTEKANEHQWPEEFLDDVESRIWITYRSNFTPIPKPPNQEANPAMTLTVHLRSQLMDSQGFTSDTGWGCMIRSGQSLLANAMLILLLGRDWRRGTEAGKEAQLLHQFADHPEAPFSIHRFVQHGAEFCNKYPGEWFGPSATARCIQALVAQQGSSELRVYITDDTADIYEDKFARIAQAEHGDFIPTLILVGTRLGIDHVTPAYWDALKEALQLPQSVGIAGGRPSASHYFIGVHGQYLFYLDPHHTRPASLHQDVNDTLTHEEVNTYHTRRLRRIHIKDMDPSMLIGFIIRSREDWTDWKTRILSGRGNSIVHILSEDTANHQARKEAIDEVEALDD</sequence>
<dbReference type="EC" id="3.4.22.-"/>
<dbReference type="EMBL" id="DS027056">
    <property type="protein sequence ID" value="EAW09132.1"/>
    <property type="molecule type" value="Genomic_DNA"/>
</dbReference>
<dbReference type="RefSeq" id="XP_001270558.1">
    <property type="nucleotide sequence ID" value="XM_001270557.1"/>
</dbReference>
<dbReference type="SMR" id="A1CJ08"/>
<dbReference type="STRING" id="344612.A1CJ08"/>
<dbReference type="MEROPS" id="C54.001"/>
<dbReference type="EnsemblFungi" id="EAW09132">
    <property type="protein sequence ID" value="EAW09132"/>
    <property type="gene ID" value="ACLA_033350"/>
</dbReference>
<dbReference type="GeneID" id="4703239"/>
<dbReference type="KEGG" id="act:ACLA_033350"/>
<dbReference type="VEuPathDB" id="FungiDB:ACLA_033350"/>
<dbReference type="eggNOG" id="KOG2674">
    <property type="taxonomic scope" value="Eukaryota"/>
</dbReference>
<dbReference type="HOGENOM" id="CLU_021259_5_1_1"/>
<dbReference type="OMA" id="TGFGCMI"/>
<dbReference type="OrthoDB" id="2960936at2759"/>
<dbReference type="Proteomes" id="UP000006701">
    <property type="component" value="Unassembled WGS sequence"/>
</dbReference>
<dbReference type="GO" id="GO:0005829">
    <property type="term" value="C:cytosol"/>
    <property type="evidence" value="ECO:0007669"/>
    <property type="project" value="EnsemblFungi"/>
</dbReference>
<dbReference type="GO" id="GO:0005739">
    <property type="term" value="C:mitochondrion"/>
    <property type="evidence" value="ECO:0007669"/>
    <property type="project" value="EnsemblFungi"/>
</dbReference>
<dbReference type="GO" id="GO:0005634">
    <property type="term" value="C:nucleus"/>
    <property type="evidence" value="ECO:0007669"/>
    <property type="project" value="UniProtKB-SubCell"/>
</dbReference>
<dbReference type="GO" id="GO:0000407">
    <property type="term" value="C:phagophore assembly site"/>
    <property type="evidence" value="ECO:0007669"/>
    <property type="project" value="UniProtKB-SubCell"/>
</dbReference>
<dbReference type="GO" id="GO:0004197">
    <property type="term" value="F:cysteine-type endopeptidase activity"/>
    <property type="evidence" value="ECO:0007669"/>
    <property type="project" value="TreeGrafter"/>
</dbReference>
<dbReference type="GO" id="GO:0019786">
    <property type="term" value="F:protein-phosphatidylethanolamide deconjugating activity"/>
    <property type="evidence" value="ECO:0007669"/>
    <property type="project" value="EnsemblFungi"/>
</dbReference>
<dbReference type="GO" id="GO:0035973">
    <property type="term" value="P:aggrephagy"/>
    <property type="evidence" value="ECO:0007669"/>
    <property type="project" value="TreeGrafter"/>
</dbReference>
<dbReference type="GO" id="GO:0000045">
    <property type="term" value="P:autophagosome assembly"/>
    <property type="evidence" value="ECO:0007669"/>
    <property type="project" value="EnsemblFungi"/>
</dbReference>
<dbReference type="GO" id="GO:0000423">
    <property type="term" value="P:mitophagy"/>
    <property type="evidence" value="ECO:0007669"/>
    <property type="project" value="TreeGrafter"/>
</dbReference>
<dbReference type="GO" id="GO:0034727">
    <property type="term" value="P:piecemeal microautophagy of the nucleus"/>
    <property type="evidence" value="ECO:0007669"/>
    <property type="project" value="EnsemblFungi"/>
</dbReference>
<dbReference type="GO" id="GO:0016485">
    <property type="term" value="P:protein processing"/>
    <property type="evidence" value="ECO:0007669"/>
    <property type="project" value="TreeGrafter"/>
</dbReference>
<dbReference type="GO" id="GO:0006612">
    <property type="term" value="P:protein targeting to membrane"/>
    <property type="evidence" value="ECO:0007669"/>
    <property type="project" value="EnsemblFungi"/>
</dbReference>
<dbReference type="GO" id="GO:0015031">
    <property type="term" value="P:protein transport"/>
    <property type="evidence" value="ECO:0007669"/>
    <property type="project" value="UniProtKB-KW"/>
</dbReference>
<dbReference type="InterPro" id="IPR038765">
    <property type="entry name" value="Papain-like_cys_pep_sf"/>
</dbReference>
<dbReference type="InterPro" id="IPR005078">
    <property type="entry name" value="Peptidase_C54"/>
</dbReference>
<dbReference type="InterPro" id="IPR046792">
    <property type="entry name" value="Peptidase_C54_cat"/>
</dbReference>
<dbReference type="PANTHER" id="PTHR22624:SF49">
    <property type="entry name" value="CYSTEINE PROTEASE"/>
    <property type="match status" value="1"/>
</dbReference>
<dbReference type="PANTHER" id="PTHR22624">
    <property type="entry name" value="CYSTEINE PROTEASE ATG4"/>
    <property type="match status" value="1"/>
</dbReference>
<dbReference type="Pfam" id="PF03416">
    <property type="entry name" value="Peptidase_C54"/>
    <property type="match status" value="1"/>
</dbReference>
<dbReference type="SUPFAM" id="SSF54001">
    <property type="entry name" value="Cysteine proteinases"/>
    <property type="match status" value="1"/>
</dbReference>
<evidence type="ECO:0000250" key="1">
    <source>
        <dbReference type="UniProtKB" id="P53867"/>
    </source>
</evidence>
<evidence type="ECO:0000250" key="2">
    <source>
        <dbReference type="UniProtKB" id="Q9Y4P1"/>
    </source>
</evidence>
<evidence type="ECO:0000305" key="3"/>
<keyword id="KW-0072">Autophagy</keyword>
<keyword id="KW-0963">Cytoplasm</keyword>
<keyword id="KW-0378">Hydrolase</keyword>
<keyword id="KW-0539">Nucleus</keyword>
<keyword id="KW-0645">Protease</keyword>
<keyword id="KW-0653">Protein transport</keyword>
<keyword id="KW-1185">Reference proteome</keyword>
<keyword id="KW-0788">Thiol protease</keyword>
<keyword id="KW-0813">Transport</keyword>
<proteinExistence type="inferred from homology"/>